<gene>
    <name type="primary">SLAH4</name>
    <name type="ordered locus">At1g62262</name>
    <name type="ORF">F19K23</name>
</gene>
<dbReference type="EMBL" id="AC000375">
    <property type="status" value="NOT_ANNOTATED_CDS"/>
    <property type="molecule type" value="Genomic_DNA"/>
</dbReference>
<dbReference type="EMBL" id="CP002684">
    <property type="protein sequence ID" value="AEE33943.1"/>
    <property type="molecule type" value="Genomic_DNA"/>
</dbReference>
<dbReference type="EMBL" id="DQ108890">
    <property type="status" value="NOT_ANNOTATED_CDS"/>
    <property type="molecule type" value="mRNA"/>
</dbReference>
<dbReference type="RefSeq" id="NP_001077757.1">
    <property type="nucleotide sequence ID" value="NM_001084288.2"/>
</dbReference>
<dbReference type="SMR" id="A8MRV9"/>
<dbReference type="STRING" id="3702.A8MRV9"/>
<dbReference type="iPTMnet" id="A8MRV9"/>
<dbReference type="PaxDb" id="3702-AT1G62262.1"/>
<dbReference type="EnsemblPlants" id="AT1G62262.1">
    <property type="protein sequence ID" value="AT1G62262.1"/>
    <property type="gene ID" value="AT1G62262"/>
</dbReference>
<dbReference type="GeneID" id="5007829"/>
<dbReference type="Gramene" id="AT1G62262.1">
    <property type="protein sequence ID" value="AT1G62262.1"/>
    <property type="gene ID" value="AT1G62262"/>
</dbReference>
<dbReference type="KEGG" id="ath:AT1G62262"/>
<dbReference type="Araport" id="AT1G62262"/>
<dbReference type="TAIR" id="AT1G62262">
    <property type="gene designation" value="SLAH4"/>
</dbReference>
<dbReference type="eggNOG" id="ENOG502QSGW">
    <property type="taxonomic scope" value="Eukaryota"/>
</dbReference>
<dbReference type="HOGENOM" id="CLU_044414_2_0_1"/>
<dbReference type="InParanoid" id="A8MRV9"/>
<dbReference type="OMA" id="HHIGVNC"/>
<dbReference type="PhylomeDB" id="A8MRV9"/>
<dbReference type="PRO" id="PR:A8MRV9"/>
<dbReference type="Proteomes" id="UP000006548">
    <property type="component" value="Chromosome 1"/>
</dbReference>
<dbReference type="ExpressionAtlas" id="A8MRV9">
    <property type="expression patterns" value="baseline and differential"/>
</dbReference>
<dbReference type="GO" id="GO:0005886">
    <property type="term" value="C:plasma membrane"/>
    <property type="evidence" value="ECO:0007669"/>
    <property type="project" value="UniProtKB-SubCell"/>
</dbReference>
<dbReference type="GO" id="GO:0008308">
    <property type="term" value="F:voltage-gated monoatomic anion channel activity"/>
    <property type="evidence" value="ECO:0007669"/>
    <property type="project" value="InterPro"/>
</dbReference>
<dbReference type="GO" id="GO:0006873">
    <property type="term" value="P:intracellular monoatomic ion homeostasis"/>
    <property type="evidence" value="ECO:0000250"/>
    <property type="project" value="TAIR"/>
</dbReference>
<dbReference type="CDD" id="cd09323">
    <property type="entry name" value="TDT_SLAC1_like"/>
    <property type="match status" value="1"/>
</dbReference>
<dbReference type="FunFam" id="1.50.10.150:FF:000003">
    <property type="entry name" value="S-type anion channel SLAH1"/>
    <property type="match status" value="1"/>
</dbReference>
<dbReference type="Gene3D" id="1.50.10.150">
    <property type="entry name" value="Voltage-dependent anion channel"/>
    <property type="match status" value="1"/>
</dbReference>
<dbReference type="InterPro" id="IPR030183">
    <property type="entry name" value="SLAC/SLAH"/>
</dbReference>
<dbReference type="InterPro" id="IPR004695">
    <property type="entry name" value="SLAC1/Mae1/Ssu1/TehA"/>
</dbReference>
<dbReference type="InterPro" id="IPR038665">
    <property type="entry name" value="Voltage-dep_anion_channel_sf"/>
</dbReference>
<dbReference type="PANTHER" id="PTHR31269">
    <property type="entry name" value="S-TYPE ANION CHANNEL SLAH3"/>
    <property type="match status" value="1"/>
</dbReference>
<dbReference type="PANTHER" id="PTHR31269:SF59">
    <property type="entry name" value="S-TYPE ANION CHANNEL SLAH4"/>
    <property type="match status" value="1"/>
</dbReference>
<dbReference type="Pfam" id="PF03595">
    <property type="entry name" value="SLAC1"/>
    <property type="match status" value="1"/>
</dbReference>
<accession>A8MRV9</accession>
<evidence type="ECO:0000250" key="1"/>
<evidence type="ECO:0000255" key="2"/>
<evidence type="ECO:0000305" key="3"/>
<keyword id="KW-1003">Cell membrane</keyword>
<keyword id="KW-0406">Ion transport</keyword>
<keyword id="KW-0472">Membrane</keyword>
<keyword id="KW-1185">Reference proteome</keyword>
<keyword id="KW-0812">Transmembrane</keyword>
<keyword id="KW-1133">Transmembrane helix</keyword>
<keyword id="KW-0813">Transport</keyword>
<proteinExistence type="evidence at transcript level"/>
<comment type="function">
    <text evidence="1">Slow, weak voltage-dependent S-type anion efflux channel involved in maintenance of anion homeostasis.</text>
</comment>
<comment type="subunit">
    <text evidence="1">Homotrimer.</text>
</comment>
<comment type="subcellular location">
    <subcellularLocation>
        <location evidence="1">Cell membrane</location>
        <topology evidence="1">Multi-pass membrane protein</topology>
    </subcellularLocation>
</comment>
<comment type="similarity">
    <text evidence="3">Belongs to the SLAC1 S-type anion channel family.</text>
</comment>
<protein>
    <recommendedName>
        <fullName>S-type anion channel SLAH4</fullName>
    </recommendedName>
    <alternativeName>
        <fullName>SLAC1-homolog protein 4</fullName>
    </alternativeName>
</protein>
<name>SLAH4_ARATH</name>
<sequence>MEIPSQEIHIMIDNTISRRKERKTNLADAEPIVLMSVLSSLHAGYFRISLSLCSQALLWKIMVHLHSELPSMAYYLLWYLALATQVSLCFLYAFKCIFLFDMVKEEFSHYIGVNYLYAPSISCLLLLQSAPMIEPHSVLYQTLFWIFAVPVLTLDTKLYGQWFTTEKRFLSIMANPASQVSVIANLVAARGAAEMGWKECALCLFSLGMVHYLVIFVTLYQRLPGGNNFPTTLRPVFFLFFAAPATASLAWNSICGNFDTIAKMLFFLSLFIFISLVCRPNLLKKSIKRFNVAWWAYSFPITFLALNSVQYAQEVKDHVASVLMFIFSSMSVLIFISVMLLTAANSKRLLRRDHVLWSSTGPKDK</sequence>
<organism>
    <name type="scientific">Arabidopsis thaliana</name>
    <name type="common">Mouse-ear cress</name>
    <dbReference type="NCBI Taxonomy" id="3702"/>
    <lineage>
        <taxon>Eukaryota</taxon>
        <taxon>Viridiplantae</taxon>
        <taxon>Streptophyta</taxon>
        <taxon>Embryophyta</taxon>
        <taxon>Tracheophyta</taxon>
        <taxon>Spermatophyta</taxon>
        <taxon>Magnoliopsida</taxon>
        <taxon>eudicotyledons</taxon>
        <taxon>Gunneridae</taxon>
        <taxon>Pentapetalae</taxon>
        <taxon>rosids</taxon>
        <taxon>malvids</taxon>
        <taxon>Brassicales</taxon>
        <taxon>Brassicaceae</taxon>
        <taxon>Camelineae</taxon>
        <taxon>Arabidopsis</taxon>
    </lineage>
</organism>
<feature type="chain" id="PRO_0000404263" description="S-type anion channel SLAH4">
    <location>
        <begin position="1"/>
        <end position="365"/>
    </location>
</feature>
<feature type="topological domain" description="Cytoplasmic" evidence="3">
    <location>
        <begin position="1"/>
        <end position="25"/>
    </location>
</feature>
<feature type="transmembrane region" description="Helical" evidence="2">
    <location>
        <begin position="26"/>
        <end position="46"/>
    </location>
</feature>
<feature type="topological domain" description="Extracellular" evidence="3">
    <location>
        <begin position="47"/>
        <end position="73"/>
    </location>
</feature>
<feature type="transmembrane region" description="Helical" evidence="2">
    <location>
        <begin position="74"/>
        <end position="94"/>
    </location>
</feature>
<feature type="topological domain" description="Cytoplasmic" evidence="3">
    <location>
        <begin position="95"/>
        <end position="106"/>
    </location>
</feature>
<feature type="transmembrane region" description="Helical" evidence="2">
    <location>
        <begin position="107"/>
        <end position="127"/>
    </location>
</feature>
<feature type="topological domain" description="Extracellular" evidence="3">
    <location>
        <begin position="128"/>
        <end position="131"/>
    </location>
</feature>
<feature type="transmembrane region" description="Helical" evidence="2">
    <location>
        <begin position="132"/>
        <end position="152"/>
    </location>
</feature>
<feature type="topological domain" description="Cytoplasmic" evidence="3">
    <location>
        <begin position="153"/>
        <end position="168"/>
    </location>
</feature>
<feature type="transmembrane region" description="Helical" evidence="2">
    <location>
        <begin position="169"/>
        <end position="189"/>
    </location>
</feature>
<feature type="topological domain" description="Extracellular" evidence="3">
    <location>
        <begin position="190"/>
        <end position="199"/>
    </location>
</feature>
<feature type="transmembrane region" description="Helical" evidence="2">
    <location>
        <begin position="200"/>
        <end position="220"/>
    </location>
</feature>
<feature type="topological domain" description="Cytoplasmic" evidence="3">
    <location>
        <begin position="221"/>
        <end position="235"/>
    </location>
</feature>
<feature type="transmembrane region" description="Helical" evidence="2">
    <location>
        <begin position="236"/>
        <end position="256"/>
    </location>
</feature>
<feature type="topological domain" description="Extracellular" evidence="3">
    <location>
        <position position="257"/>
    </location>
</feature>
<feature type="transmembrane region" description="Helical" evidence="2">
    <location>
        <begin position="258"/>
        <end position="278"/>
    </location>
</feature>
<feature type="topological domain" description="Cytoplasmic" evidence="3">
    <location>
        <begin position="279"/>
        <end position="291"/>
    </location>
</feature>
<feature type="transmembrane region" description="Helical" evidence="2">
    <location>
        <begin position="292"/>
        <end position="312"/>
    </location>
</feature>
<feature type="topological domain" description="Extracellular" evidence="3">
    <location>
        <begin position="313"/>
        <end position="321"/>
    </location>
</feature>
<feature type="transmembrane region" description="Helical" evidence="2">
    <location>
        <begin position="322"/>
        <end position="342"/>
    </location>
</feature>
<feature type="topological domain" description="Cytoplasmic" evidence="3">
    <location>
        <begin position="343"/>
        <end position="365"/>
    </location>
</feature>
<feature type="sequence conflict" description="In Ref. 3; DQ108890." evidence="3" ref="3">
    <original>S</original>
    <variation>A</variation>
    <location>
        <position position="129"/>
    </location>
</feature>
<feature type="sequence conflict" description="In Ref. 3; DQ108890." evidence="3" ref="3">
    <original>F</original>
    <variation>C</variation>
    <location>
        <position position="258"/>
    </location>
</feature>
<feature type="sequence conflict" description="In Ref. 3; DQ108890." evidence="3" ref="3">
    <original>IS</original>
    <variation>LG</variation>
    <location>
        <begin position="336"/>
        <end position="337"/>
    </location>
</feature>
<reference key="1">
    <citation type="journal article" date="2000" name="Nature">
        <title>Sequence and analysis of chromosome 1 of the plant Arabidopsis thaliana.</title>
        <authorList>
            <person name="Theologis A."/>
            <person name="Ecker J.R."/>
            <person name="Palm C.J."/>
            <person name="Federspiel N.A."/>
            <person name="Kaul S."/>
            <person name="White O."/>
            <person name="Alonso J."/>
            <person name="Altafi H."/>
            <person name="Araujo R."/>
            <person name="Bowman C.L."/>
            <person name="Brooks S.Y."/>
            <person name="Buehler E."/>
            <person name="Chan A."/>
            <person name="Chao Q."/>
            <person name="Chen H."/>
            <person name="Cheuk R.F."/>
            <person name="Chin C.W."/>
            <person name="Chung M.K."/>
            <person name="Conn L."/>
            <person name="Conway A.B."/>
            <person name="Conway A.R."/>
            <person name="Creasy T.H."/>
            <person name="Dewar K."/>
            <person name="Dunn P."/>
            <person name="Etgu P."/>
            <person name="Feldblyum T.V."/>
            <person name="Feng J.-D."/>
            <person name="Fong B."/>
            <person name="Fujii C.Y."/>
            <person name="Gill J.E."/>
            <person name="Goldsmith A.D."/>
            <person name="Haas B."/>
            <person name="Hansen N.F."/>
            <person name="Hughes B."/>
            <person name="Huizar L."/>
            <person name="Hunter J.L."/>
            <person name="Jenkins J."/>
            <person name="Johnson-Hopson C."/>
            <person name="Khan S."/>
            <person name="Khaykin E."/>
            <person name="Kim C.J."/>
            <person name="Koo H.L."/>
            <person name="Kremenetskaia I."/>
            <person name="Kurtz D.B."/>
            <person name="Kwan A."/>
            <person name="Lam B."/>
            <person name="Langin-Hooper S."/>
            <person name="Lee A."/>
            <person name="Lee J.M."/>
            <person name="Lenz C.A."/>
            <person name="Li J.H."/>
            <person name="Li Y.-P."/>
            <person name="Lin X."/>
            <person name="Liu S.X."/>
            <person name="Liu Z.A."/>
            <person name="Luros J.S."/>
            <person name="Maiti R."/>
            <person name="Marziali A."/>
            <person name="Militscher J."/>
            <person name="Miranda M."/>
            <person name="Nguyen M."/>
            <person name="Nierman W.C."/>
            <person name="Osborne B.I."/>
            <person name="Pai G."/>
            <person name="Peterson J."/>
            <person name="Pham P.K."/>
            <person name="Rizzo M."/>
            <person name="Rooney T."/>
            <person name="Rowley D."/>
            <person name="Sakano H."/>
            <person name="Salzberg S.L."/>
            <person name="Schwartz J.R."/>
            <person name="Shinn P."/>
            <person name="Southwick A.M."/>
            <person name="Sun H."/>
            <person name="Tallon L.J."/>
            <person name="Tambunga G."/>
            <person name="Toriumi M.J."/>
            <person name="Town C.D."/>
            <person name="Utterback T."/>
            <person name="Van Aken S."/>
            <person name="Vaysberg M."/>
            <person name="Vysotskaia V.S."/>
            <person name="Walker M."/>
            <person name="Wu D."/>
            <person name="Yu G."/>
            <person name="Fraser C.M."/>
            <person name="Venter J.C."/>
            <person name="Davis R.W."/>
        </authorList>
    </citation>
    <scope>NUCLEOTIDE SEQUENCE [LARGE SCALE GENOMIC DNA]</scope>
    <source>
        <strain>cv. Columbia</strain>
    </source>
</reference>
<reference key="2">
    <citation type="journal article" date="2017" name="Plant J.">
        <title>Araport11: a complete reannotation of the Arabidopsis thaliana reference genome.</title>
        <authorList>
            <person name="Cheng C.Y."/>
            <person name="Krishnakumar V."/>
            <person name="Chan A.P."/>
            <person name="Thibaud-Nissen F."/>
            <person name="Schobel S."/>
            <person name="Town C.D."/>
        </authorList>
    </citation>
    <scope>GENOME REANNOTATION</scope>
    <source>
        <strain>cv. Columbia</strain>
    </source>
</reference>
<reference key="3">
    <citation type="submission" date="2005-06" db="EMBL/GenBank/DDBJ databases">
        <title>Full-length cDNA from Arabidopsis thaliana.</title>
        <authorList>
            <person name="Alexandrov N.N."/>
            <person name="Brover V.V."/>
            <person name="Troukhan M.E."/>
            <person name="Lu Y.-P."/>
            <person name="Flavell R.B."/>
            <person name="Feldmann K.A."/>
        </authorList>
    </citation>
    <scope>NUCLEOTIDE SEQUENCE [LARGE SCALE MRNA]</scope>
</reference>
<reference key="4">
    <citation type="journal article" date="2008" name="Nature">
        <title>CO2 regulator SLAC1 and its homologues are essential for anion homeostasis in plant cells.</title>
        <authorList>
            <person name="Negi J."/>
            <person name="Matsuda O."/>
            <person name="Nagasawa T."/>
            <person name="Oba Y."/>
            <person name="Takahashi H."/>
            <person name="Kawai-Yamada M."/>
            <person name="Uchimiya H."/>
            <person name="Hashimoto M."/>
            <person name="Iba K."/>
        </authorList>
    </citation>
    <scope>GENE FAMILY</scope>
    <scope>NOMENCLATURE</scope>
    <source>
        <strain>cv. Columbia</strain>
    </source>
</reference>